<reference key="1">
    <citation type="journal article" date="2006" name="Lancet">
        <title>Complete genome sequence of USA300, an epidemic clone of community-acquired meticillin-resistant Staphylococcus aureus.</title>
        <authorList>
            <person name="Diep B.A."/>
            <person name="Gill S.R."/>
            <person name="Chang R.F."/>
            <person name="Phan T.H."/>
            <person name="Chen J.H."/>
            <person name="Davidson M.G."/>
            <person name="Lin F."/>
            <person name="Lin J."/>
            <person name="Carleton H.A."/>
            <person name="Mongodin E.F."/>
            <person name="Sensabaugh G.F."/>
            <person name="Perdreau-Remington F."/>
        </authorList>
    </citation>
    <scope>NUCLEOTIDE SEQUENCE [LARGE SCALE GENOMIC DNA]</scope>
    <source>
        <strain>USA300</strain>
    </source>
</reference>
<proteinExistence type="inferred from homology"/>
<name>SDCS_STAA3</name>
<gene>
    <name type="primary">sdcS</name>
    <name type="ordered locus">SAUSA300_1897</name>
</gene>
<accession>Q2FFH9</accession>
<organism>
    <name type="scientific">Staphylococcus aureus (strain USA300)</name>
    <dbReference type="NCBI Taxonomy" id="367830"/>
    <lineage>
        <taxon>Bacteria</taxon>
        <taxon>Bacillati</taxon>
        <taxon>Bacillota</taxon>
        <taxon>Bacilli</taxon>
        <taxon>Bacillales</taxon>
        <taxon>Staphylococcaceae</taxon>
        <taxon>Staphylococcus</taxon>
    </lineage>
</organism>
<sequence>MAYFNQHQSMISKRYLTFFSKSKKKKPFSAGQLIGLILGPLLFLLTLLFFHPQDLPWKGVYVLAITLWIATWWITEAIPIAATSLLPIVLLPLGHILTPEQVSSEYGNDIIFLFLGGFILAIAMERWNLHTRVALTIINLIGASTSKILLGFMVATGFLSMFVSNTAAVMIMIPIGLAIIKEAHDLQEANTNQTSIQKFEKSLVLAIGYAGTIGGLGTLIGTPPLIILKGQYMQHFGYEISFAKWMIVGIPTVIVLLGITWLYLRYVAFRHDLKYLPGGQTLIKQKLDELGKMKYEEKVVQTIFVLASLLWITREFLLKKWEVTSSVADGTIAIFISILLFIIPAKNTEKHRRIIDWEVAKELPWGVLILFGGGLALAKGISESGLAKWLGEQLKSLNGVSPILIVIVITIFVLFLTEVTSNTATATMILPILATLSVAVGVHPLLLMAPAAMAANCAYMLPVGTPPNAIIFGSGKISIKQMASVGFWVNLISAIIIILVVYYVMPIVLGIDINQPLPLK</sequence>
<protein>
    <recommendedName>
        <fullName>Sodium-dependent dicarboxylate transporter SdcS</fullName>
    </recommendedName>
    <alternativeName>
        <fullName>Na(+)/dicarboxylate symporter</fullName>
    </alternativeName>
</protein>
<evidence type="ECO:0000250" key="1"/>
<evidence type="ECO:0000255" key="2"/>
<evidence type="ECO:0000305" key="3"/>
<keyword id="KW-1003">Cell membrane</keyword>
<keyword id="KW-0406">Ion transport</keyword>
<keyword id="KW-0472">Membrane</keyword>
<keyword id="KW-0915">Sodium</keyword>
<keyword id="KW-0739">Sodium transport</keyword>
<keyword id="KW-0769">Symport</keyword>
<keyword id="KW-0812">Transmembrane</keyword>
<keyword id="KW-1133">Transmembrane helix</keyword>
<keyword id="KW-0813">Transport</keyword>
<dbReference type="EMBL" id="CP000255">
    <property type="protein sequence ID" value="ABD21464.1"/>
    <property type="molecule type" value="Genomic_DNA"/>
</dbReference>
<dbReference type="RefSeq" id="WP_000323167.1">
    <property type="nucleotide sequence ID" value="NZ_CP027476.1"/>
</dbReference>
<dbReference type="SMR" id="Q2FFH9"/>
<dbReference type="TCDB" id="2.A.47.1.11">
    <property type="family name" value="the divalent anion:na(+) symporter (dass) family"/>
</dbReference>
<dbReference type="KEGG" id="saa:SAUSA300_1897"/>
<dbReference type="HOGENOM" id="CLU_005170_0_0_9"/>
<dbReference type="OMA" id="LMGIWWM"/>
<dbReference type="Proteomes" id="UP000001939">
    <property type="component" value="Chromosome"/>
</dbReference>
<dbReference type="GO" id="GO:0005886">
    <property type="term" value="C:plasma membrane"/>
    <property type="evidence" value="ECO:0007669"/>
    <property type="project" value="UniProtKB-SubCell"/>
</dbReference>
<dbReference type="GO" id="GO:0008514">
    <property type="term" value="F:organic anion transmembrane transporter activity"/>
    <property type="evidence" value="ECO:0007669"/>
    <property type="project" value="UniProtKB-ARBA"/>
</dbReference>
<dbReference type="GO" id="GO:0015293">
    <property type="term" value="F:symporter activity"/>
    <property type="evidence" value="ECO:0007669"/>
    <property type="project" value="UniProtKB-KW"/>
</dbReference>
<dbReference type="GO" id="GO:1905039">
    <property type="term" value="P:carboxylic acid transmembrane transport"/>
    <property type="evidence" value="ECO:0007669"/>
    <property type="project" value="UniProtKB-ARBA"/>
</dbReference>
<dbReference type="GO" id="GO:0006814">
    <property type="term" value="P:sodium ion transport"/>
    <property type="evidence" value="ECO:0007669"/>
    <property type="project" value="UniProtKB-KW"/>
</dbReference>
<dbReference type="CDD" id="cd01115">
    <property type="entry name" value="SLC13_permease"/>
    <property type="match status" value="1"/>
</dbReference>
<dbReference type="InterPro" id="IPR001898">
    <property type="entry name" value="SLC13A/DASS"/>
</dbReference>
<dbReference type="NCBIfam" id="TIGR00785">
    <property type="entry name" value="dass"/>
    <property type="match status" value="1"/>
</dbReference>
<dbReference type="PANTHER" id="PTHR10283">
    <property type="entry name" value="SOLUTE CARRIER FAMILY 13 MEMBER"/>
    <property type="match status" value="1"/>
</dbReference>
<dbReference type="PANTHER" id="PTHR10283:SF82">
    <property type="entry name" value="SOLUTE CARRIER FAMILY 13 MEMBER 2"/>
    <property type="match status" value="1"/>
</dbReference>
<dbReference type="Pfam" id="PF00939">
    <property type="entry name" value="Na_sulph_symp"/>
    <property type="match status" value="1"/>
</dbReference>
<feature type="chain" id="PRO_0000260099" description="Sodium-dependent dicarboxylate transporter SdcS">
    <location>
        <begin position="1"/>
        <end position="520"/>
    </location>
</feature>
<feature type="transmembrane region" description="Helical" evidence="2">
    <location>
        <begin position="30"/>
        <end position="50"/>
    </location>
</feature>
<feature type="transmembrane region" description="Helical" evidence="2">
    <location>
        <begin position="55"/>
        <end position="75"/>
    </location>
</feature>
<feature type="transmembrane region" description="Helical" evidence="2">
    <location>
        <begin position="77"/>
        <end position="97"/>
    </location>
</feature>
<feature type="transmembrane region" description="Helical" evidence="2">
    <location>
        <begin position="104"/>
        <end position="124"/>
    </location>
</feature>
<feature type="transmembrane region" description="Helical" evidence="2">
    <location>
        <begin position="160"/>
        <end position="180"/>
    </location>
</feature>
<feature type="transmembrane region" description="Helical" evidence="2">
    <location>
        <begin position="207"/>
        <end position="227"/>
    </location>
</feature>
<feature type="transmembrane region" description="Helical" evidence="2">
    <location>
        <begin position="242"/>
        <end position="262"/>
    </location>
</feature>
<feature type="transmembrane region" description="Helical" evidence="2">
    <location>
        <begin position="298"/>
        <end position="318"/>
    </location>
</feature>
<feature type="transmembrane region" description="Helical" evidence="2">
    <location>
        <begin position="323"/>
        <end position="343"/>
    </location>
</feature>
<feature type="transmembrane region" description="Helical" evidence="2">
    <location>
        <begin position="362"/>
        <end position="382"/>
    </location>
</feature>
<feature type="transmembrane region" description="Helical" evidence="2">
    <location>
        <begin position="399"/>
        <end position="419"/>
    </location>
</feature>
<feature type="transmembrane region" description="Helical" evidence="2">
    <location>
        <begin position="428"/>
        <end position="448"/>
    </location>
</feature>
<feature type="transmembrane region" description="Helical" evidence="2">
    <location>
        <begin position="452"/>
        <end position="472"/>
    </location>
</feature>
<feature type="transmembrane region" description="Helical" evidence="2">
    <location>
        <begin position="491"/>
        <end position="511"/>
    </location>
</feature>
<comment type="function">
    <text evidence="1">Mediates the transport of the dicarboxylates fumarate, malate, and succinate across the cytoplasmic membrane via a Na(+)-electrochemical gradient.</text>
</comment>
<comment type="subcellular location">
    <subcellularLocation>
        <location evidence="3">Cell membrane</location>
        <topology evidence="3">Multi-pass membrane protein</topology>
    </subcellularLocation>
</comment>
<comment type="similarity">
    <text evidence="3">Belongs to the SLC13A/DASS transporter (TC 2.A.47) family. NADC subfamily.</text>
</comment>